<gene>
    <name type="primary">gltA</name>
    <name type="ordered locus">Rsl_1491</name>
</gene>
<evidence type="ECO:0000255" key="1">
    <source>
        <dbReference type="PROSITE-ProRule" id="PRU10117"/>
    </source>
</evidence>
<evidence type="ECO:0000305" key="2"/>
<keyword id="KW-0808">Transferase</keyword>
<keyword id="KW-0816">Tricarboxylic acid cycle</keyword>
<dbReference type="EC" id="2.3.3.16"/>
<dbReference type="EMBL" id="CP002428">
    <property type="protein sequence ID" value="AEV92756.1"/>
    <property type="molecule type" value="Genomic_DNA"/>
</dbReference>
<dbReference type="EMBL" id="U59725">
    <property type="protein sequence ID" value="AAB02969.1"/>
    <property type="molecule type" value="Genomic_DNA"/>
</dbReference>
<dbReference type="RefSeq" id="WP_004997172.1">
    <property type="nucleotide sequence ID" value="NC_016639.1"/>
</dbReference>
<dbReference type="SMR" id="Q59776"/>
<dbReference type="GeneID" id="95361701"/>
<dbReference type="KEGG" id="rsv:Rsl_1491"/>
<dbReference type="HOGENOM" id="CLU_025068_0_0_5"/>
<dbReference type="UniPathway" id="UPA00223">
    <property type="reaction ID" value="UER00717"/>
</dbReference>
<dbReference type="GO" id="GO:0005737">
    <property type="term" value="C:cytoplasm"/>
    <property type="evidence" value="ECO:0007669"/>
    <property type="project" value="InterPro"/>
</dbReference>
<dbReference type="GO" id="GO:0004108">
    <property type="term" value="F:citrate (Si)-synthase activity"/>
    <property type="evidence" value="ECO:0007669"/>
    <property type="project" value="InterPro"/>
</dbReference>
<dbReference type="GO" id="GO:0006099">
    <property type="term" value="P:tricarboxylic acid cycle"/>
    <property type="evidence" value="ECO:0007669"/>
    <property type="project" value="UniProtKB-UniPathway"/>
</dbReference>
<dbReference type="CDD" id="cd06114">
    <property type="entry name" value="EcCS_like"/>
    <property type="match status" value="1"/>
</dbReference>
<dbReference type="FunFam" id="1.10.230.10:FF:000002">
    <property type="entry name" value="Citrate synthase"/>
    <property type="match status" value="1"/>
</dbReference>
<dbReference type="Gene3D" id="2.20.28.60">
    <property type="match status" value="1"/>
</dbReference>
<dbReference type="Gene3D" id="1.10.580.10">
    <property type="entry name" value="Citrate Synthase, domain 1"/>
    <property type="match status" value="1"/>
</dbReference>
<dbReference type="Gene3D" id="1.10.230.10">
    <property type="entry name" value="Cytochrome P450-Terp, domain 2"/>
    <property type="match status" value="1"/>
</dbReference>
<dbReference type="InterPro" id="IPR016142">
    <property type="entry name" value="Citrate_synth-like_lrg_a-sub"/>
</dbReference>
<dbReference type="InterPro" id="IPR016143">
    <property type="entry name" value="Citrate_synth-like_sm_a-sub"/>
</dbReference>
<dbReference type="InterPro" id="IPR002020">
    <property type="entry name" value="Citrate_synthase"/>
</dbReference>
<dbReference type="InterPro" id="IPR019810">
    <property type="entry name" value="Citrate_synthase_AS"/>
</dbReference>
<dbReference type="InterPro" id="IPR024176">
    <property type="entry name" value="Citrate_synthase_bac-typ"/>
</dbReference>
<dbReference type="InterPro" id="IPR036969">
    <property type="entry name" value="Citrate_synthase_sf"/>
</dbReference>
<dbReference type="InterPro" id="IPR010953">
    <property type="entry name" value="Citrate_synthase_typ-I"/>
</dbReference>
<dbReference type="NCBIfam" id="TIGR01798">
    <property type="entry name" value="cit_synth_I"/>
    <property type="match status" value="1"/>
</dbReference>
<dbReference type="NCBIfam" id="NF004126">
    <property type="entry name" value="PRK05614.1"/>
    <property type="match status" value="1"/>
</dbReference>
<dbReference type="PANTHER" id="PTHR42871">
    <property type="entry name" value="CITRATE SYNTHASE"/>
    <property type="match status" value="1"/>
</dbReference>
<dbReference type="PANTHER" id="PTHR42871:SF1">
    <property type="entry name" value="CITRATE SYNTHASE"/>
    <property type="match status" value="1"/>
</dbReference>
<dbReference type="Pfam" id="PF00285">
    <property type="entry name" value="Citrate_synt"/>
    <property type="match status" value="1"/>
</dbReference>
<dbReference type="PIRSF" id="PIRSF001369">
    <property type="entry name" value="Citrate_synth"/>
    <property type="match status" value="1"/>
</dbReference>
<dbReference type="PRINTS" id="PR00143">
    <property type="entry name" value="CITRTSNTHASE"/>
</dbReference>
<dbReference type="SUPFAM" id="SSF48256">
    <property type="entry name" value="Citrate synthase"/>
    <property type="match status" value="1"/>
</dbReference>
<dbReference type="PROSITE" id="PS00480">
    <property type="entry name" value="CITRATE_SYNTHASE"/>
    <property type="match status" value="1"/>
</dbReference>
<proteinExistence type="inferred from homology"/>
<reference key="1">
    <citation type="journal article" date="2012" name="J. Bacteriol.">
        <title>Complete genome sequence of Rickettsia slovaca, the agent of tick-borne lymphadenitis.</title>
        <authorList>
            <person name="Fournier P.E."/>
            <person name="El Karkouri K."/>
            <person name="Robert C."/>
            <person name="Medigue C."/>
            <person name="Raoult D."/>
        </authorList>
    </citation>
    <scope>NUCLEOTIDE SEQUENCE [LARGE SCALE GENOMIC DNA]</scope>
    <source>
        <strain>13-B</strain>
    </source>
</reference>
<reference key="2">
    <citation type="journal article" date="1997" name="Int. J. Syst. Bacteriol.">
        <title>Citrate synthase gene comparison, a new tool for phylogenetic analysis, and its application for the rickettsiae.</title>
        <authorList>
            <person name="Roux V."/>
            <person name="Rydkina E."/>
            <person name="Eremeeva M."/>
            <person name="Raoult D."/>
        </authorList>
    </citation>
    <scope>NUCLEOTIDE SEQUENCE [GENOMIC DNA] OF 8-418</scope>
    <source>
        <strain>13-B</strain>
    </source>
</reference>
<name>CISY_RICS1</name>
<accession>Q59776</accession>
<accession>G8LC39</accession>
<feature type="chain" id="PRO_0000169970" description="Citrate synthase">
    <location>
        <begin position="1"/>
        <end position="435"/>
    </location>
</feature>
<feature type="active site" evidence="1">
    <location>
        <position position="311"/>
    </location>
</feature>
<feature type="active site" evidence="1">
    <location>
        <position position="370"/>
    </location>
</feature>
<organism>
    <name type="scientific">Rickettsia slovaca (strain 13-B)</name>
    <dbReference type="NCBI Taxonomy" id="941638"/>
    <lineage>
        <taxon>Bacteria</taxon>
        <taxon>Pseudomonadati</taxon>
        <taxon>Pseudomonadota</taxon>
        <taxon>Alphaproteobacteria</taxon>
        <taxon>Rickettsiales</taxon>
        <taxon>Rickettsiaceae</taxon>
        <taxon>Rickettsieae</taxon>
        <taxon>Rickettsia</taxon>
        <taxon>spotted fever group</taxon>
    </lineage>
</organism>
<comment type="catalytic activity">
    <reaction evidence="1">
        <text>oxaloacetate + acetyl-CoA + H2O = citrate + CoA + H(+)</text>
        <dbReference type="Rhea" id="RHEA:16845"/>
        <dbReference type="ChEBI" id="CHEBI:15377"/>
        <dbReference type="ChEBI" id="CHEBI:15378"/>
        <dbReference type="ChEBI" id="CHEBI:16452"/>
        <dbReference type="ChEBI" id="CHEBI:16947"/>
        <dbReference type="ChEBI" id="CHEBI:57287"/>
        <dbReference type="ChEBI" id="CHEBI:57288"/>
        <dbReference type="EC" id="2.3.3.16"/>
    </reaction>
</comment>
<comment type="pathway">
    <text>Carbohydrate metabolism; tricarboxylic acid cycle; isocitrate from oxaloacetate: step 1/2.</text>
</comment>
<comment type="miscellaneous">
    <text>Citrate synthase is found in nearly all cells capable of oxidative metabolism.</text>
</comment>
<comment type="similarity">
    <text evidence="2">Belongs to the citrate synthase family.</text>
</comment>
<sequence>MTNENNNDSEFAELKIRGKIFKLPILKASIGEDVIDISRVSAEADCFTYDPGFMSTASCQSTITYIDGDKGILRHRGYDIKDLAEKSDFLEVAYLLIYGELPSGEQYNNFTKQVAHHSLVNERLHYLFQTFCSSSHPMAIMLAAVGSLSAFYPDLLNFKEADYELTAIRMIAKIPTIAAMSYKYSIGQPFIYPDNSLDFTENFLHMMFATPCTKYTVNPIIKNALNKIFILHADHEQNASTSTVRIAGSSGANPFACISTGIASLWGPAHGGANEAVINMLKEIGSSEYIPKYIAKAKDKNDPFRLMGFGHRVYKNYDPRAAVLKETCKEVLKELGQLDNNPLLQIAIELEAIALKDEYFIERKLYPNVDFYSGIIYKAMGIPSQMFTVLFAIARTVGWMAQWKEMHEDPEQKISRPRQLYTGYVHREYKGIRER</sequence>
<protein>
    <recommendedName>
        <fullName>Citrate synthase</fullName>
        <ecNumber>2.3.3.16</ecNumber>
    </recommendedName>
</protein>